<sequence length="231" mass="24745">MSNTPIELKGSSFTLSVVHLHEAEPKVIHQALEDKIAQAPAFLKHAPVVLNVSALEDPVNWSAMHKAVSATGLRVIGVSGCKDAQLKAEIEKMGLPILTEGKEKAPRPAPAPQAPAQNTTPVTKTRLIDTPVRSGQRIYAPQCDLIVTSHVSAGAELIADGNIHVYGMMRGRALAGASGDRETQIFCTNLMAELVSIAGEYWLSDQIPAEFYGKAARLQLVENALTVQPLN</sequence>
<organism>
    <name type="scientific">Escherichia coli (strain SMS-3-5 / SECEC)</name>
    <dbReference type="NCBI Taxonomy" id="439855"/>
    <lineage>
        <taxon>Bacteria</taxon>
        <taxon>Pseudomonadati</taxon>
        <taxon>Pseudomonadota</taxon>
        <taxon>Gammaproteobacteria</taxon>
        <taxon>Enterobacterales</taxon>
        <taxon>Enterobacteriaceae</taxon>
        <taxon>Escherichia</taxon>
    </lineage>
</organism>
<reference key="1">
    <citation type="journal article" date="2008" name="J. Bacteriol.">
        <title>Insights into the environmental resistance gene pool from the genome sequence of the multidrug-resistant environmental isolate Escherichia coli SMS-3-5.</title>
        <authorList>
            <person name="Fricke W.F."/>
            <person name="Wright M.S."/>
            <person name="Lindell A.H."/>
            <person name="Harkins D.M."/>
            <person name="Baker-Austin C."/>
            <person name="Ravel J."/>
            <person name="Stepanauskas R."/>
        </authorList>
    </citation>
    <scope>NUCLEOTIDE SEQUENCE [LARGE SCALE GENOMIC DNA]</scope>
    <source>
        <strain>SMS-3-5 / SECEC</strain>
    </source>
</reference>
<gene>
    <name evidence="1" type="primary">minC</name>
    <name type="ordered locus">EcSMS35_1973</name>
</gene>
<evidence type="ECO:0000255" key="1">
    <source>
        <dbReference type="HAMAP-Rule" id="MF_00267"/>
    </source>
</evidence>
<evidence type="ECO:0000256" key="2">
    <source>
        <dbReference type="SAM" id="MobiDB-lite"/>
    </source>
</evidence>
<name>MINC_ECOSM</name>
<dbReference type="EMBL" id="CP000970">
    <property type="protein sequence ID" value="ACB16284.1"/>
    <property type="molecule type" value="Genomic_DNA"/>
</dbReference>
<dbReference type="RefSeq" id="WP_000072536.1">
    <property type="nucleotide sequence ID" value="NC_010498.1"/>
</dbReference>
<dbReference type="SMR" id="B1LHZ1"/>
<dbReference type="GeneID" id="93776258"/>
<dbReference type="KEGG" id="ecm:EcSMS35_1973"/>
<dbReference type="HOGENOM" id="CLU_067812_0_1_6"/>
<dbReference type="Proteomes" id="UP000007011">
    <property type="component" value="Chromosome"/>
</dbReference>
<dbReference type="GO" id="GO:0000902">
    <property type="term" value="P:cell morphogenesis"/>
    <property type="evidence" value="ECO:0007669"/>
    <property type="project" value="InterPro"/>
</dbReference>
<dbReference type="GO" id="GO:0000917">
    <property type="term" value="P:division septum assembly"/>
    <property type="evidence" value="ECO:0007669"/>
    <property type="project" value="UniProtKB-KW"/>
</dbReference>
<dbReference type="GO" id="GO:0051302">
    <property type="term" value="P:regulation of cell division"/>
    <property type="evidence" value="ECO:0007669"/>
    <property type="project" value="InterPro"/>
</dbReference>
<dbReference type="GO" id="GO:1901891">
    <property type="term" value="P:regulation of cell septum assembly"/>
    <property type="evidence" value="ECO:0007669"/>
    <property type="project" value="InterPro"/>
</dbReference>
<dbReference type="FunFam" id="2.160.20.70:FF:000002">
    <property type="entry name" value="Probable septum site-determining protein MinC"/>
    <property type="match status" value="1"/>
</dbReference>
<dbReference type="Gene3D" id="2.160.20.70">
    <property type="match status" value="1"/>
</dbReference>
<dbReference type="Gene3D" id="3.30.70.260">
    <property type="match status" value="1"/>
</dbReference>
<dbReference type="HAMAP" id="MF_00267">
    <property type="entry name" value="MinC"/>
    <property type="match status" value="1"/>
</dbReference>
<dbReference type="InterPro" id="IPR016098">
    <property type="entry name" value="CAP/MinC_C"/>
</dbReference>
<dbReference type="InterPro" id="IPR013033">
    <property type="entry name" value="MinC"/>
</dbReference>
<dbReference type="InterPro" id="IPR036145">
    <property type="entry name" value="MinC_C_sf"/>
</dbReference>
<dbReference type="InterPro" id="IPR007874">
    <property type="entry name" value="MinC_N"/>
</dbReference>
<dbReference type="InterPro" id="IPR005526">
    <property type="entry name" value="Septum_form_inhib_MinC_C"/>
</dbReference>
<dbReference type="NCBIfam" id="TIGR01222">
    <property type="entry name" value="minC"/>
    <property type="match status" value="1"/>
</dbReference>
<dbReference type="PANTHER" id="PTHR34108">
    <property type="entry name" value="SEPTUM SITE-DETERMINING PROTEIN MINC"/>
    <property type="match status" value="1"/>
</dbReference>
<dbReference type="PANTHER" id="PTHR34108:SF1">
    <property type="entry name" value="SEPTUM SITE-DETERMINING PROTEIN MINC"/>
    <property type="match status" value="1"/>
</dbReference>
<dbReference type="Pfam" id="PF03775">
    <property type="entry name" value="MinC_C"/>
    <property type="match status" value="1"/>
</dbReference>
<dbReference type="Pfam" id="PF05209">
    <property type="entry name" value="MinC_N"/>
    <property type="match status" value="1"/>
</dbReference>
<dbReference type="SUPFAM" id="SSF63848">
    <property type="entry name" value="Cell-division inhibitor MinC, C-terminal domain"/>
    <property type="match status" value="1"/>
</dbReference>
<comment type="function">
    <text evidence="1">Cell division inhibitor that blocks the formation of polar Z ring septums. Rapidly oscillates between the poles of the cell to destabilize FtsZ filaments that have formed before they mature into polar Z rings. Prevents FtsZ polymerization.</text>
</comment>
<comment type="subunit">
    <text evidence="1">Interacts with MinD and FtsZ.</text>
</comment>
<comment type="similarity">
    <text evidence="1">Belongs to the MinC family.</text>
</comment>
<proteinExistence type="inferred from homology"/>
<keyword id="KW-0131">Cell cycle</keyword>
<keyword id="KW-0132">Cell division</keyword>
<keyword id="KW-0717">Septation</keyword>
<protein>
    <recommendedName>
        <fullName evidence="1">Probable septum site-determining protein MinC</fullName>
    </recommendedName>
</protein>
<feature type="chain" id="PRO_1000191244" description="Probable septum site-determining protein MinC">
    <location>
        <begin position="1"/>
        <end position="231"/>
    </location>
</feature>
<feature type="region of interest" description="Disordered" evidence="2">
    <location>
        <begin position="102"/>
        <end position="125"/>
    </location>
</feature>
<accession>B1LHZ1</accession>